<keyword id="KW-0002">3D-structure</keyword>
<keyword id="KW-0903">Direct protein sequencing</keyword>
<keyword id="KW-0349">Heme</keyword>
<keyword id="KW-0408">Iron</keyword>
<keyword id="KW-0479">Metal-binding</keyword>
<keyword id="KW-0561">Oxygen transport</keyword>
<keyword id="KW-0732">Signal</keyword>
<keyword id="KW-0813">Transport</keyword>
<name>GLB3_CHITH</name>
<accession>P02229</accession>
<sequence>MKFLILALCFAAASALSADQISTVQASFDKVKGDPVGILYAVFKADPSIMAKFTQFAGKDLESIKGTAPFEIHANRIVGFFSKIIGELPNIEADVNTFVASHKPRGVTHDQLNNFRAGFVSYMKAHTDFAGAEAAWGATLDTFFGMIFSKM</sequence>
<evidence type="ECO:0000255" key="1">
    <source>
        <dbReference type="PROSITE-ProRule" id="PRU00238"/>
    </source>
</evidence>
<evidence type="ECO:0000269" key="2">
    <source>
    </source>
</evidence>
<evidence type="ECO:0007829" key="3">
    <source>
        <dbReference type="PDB" id="1ECA"/>
    </source>
</evidence>
<gene>
    <name type="primary">A</name>
</gene>
<gene>
    <name type="primary">A'</name>
</gene>
<gene>
    <name type="primary">B</name>
</gene>
<gene>
    <name type="primary">B'</name>
</gene>
<protein>
    <recommendedName>
        <fullName>Globin CTT-III</fullName>
    </recommendedName>
    <alternativeName>
        <fullName>Erythrocruorin III</fullName>
    </alternativeName>
</protein>
<organism>
    <name type="scientific">Chironomus thummi thummi</name>
    <name type="common">Midge</name>
    <dbReference type="NCBI Taxonomy" id="7155"/>
    <lineage>
        <taxon>Eukaryota</taxon>
        <taxon>Metazoa</taxon>
        <taxon>Ecdysozoa</taxon>
        <taxon>Arthropoda</taxon>
        <taxon>Hexapoda</taxon>
        <taxon>Insecta</taxon>
        <taxon>Pterygota</taxon>
        <taxon>Neoptera</taxon>
        <taxon>Endopterygota</taxon>
        <taxon>Diptera</taxon>
        <taxon>Nematocera</taxon>
        <taxon>Chironomoidea</taxon>
        <taxon>Chironomidae</taxon>
        <taxon>Chironominae</taxon>
        <taxon>Chironomus</taxon>
    </lineage>
</organism>
<proteinExistence type="evidence at protein level"/>
<comment type="subunit">
    <text>Monomer.</text>
</comment>
<comment type="miscellaneous">
    <text>There are at least 12 different components in Midge globin.</text>
</comment>
<comment type="miscellaneous">
    <text>The sequence of genes B and B' are shown.</text>
</comment>
<comment type="similarity">
    <text evidence="1">Belongs to the globin family.</text>
</comment>
<dbReference type="EMBL" id="M17600">
    <property type="protein sequence ID" value="AAA28249.1"/>
    <property type="molecule type" value="Genomic_DNA"/>
</dbReference>
<dbReference type="EMBL" id="M17601">
    <property type="protein sequence ID" value="AAA28250.1"/>
    <property type="molecule type" value="Genomic_DNA"/>
</dbReference>
<dbReference type="EMBL" id="M17691">
    <property type="protein sequence ID" value="AAA28254.1"/>
    <property type="molecule type" value="Genomic_DNA"/>
</dbReference>
<dbReference type="EMBL" id="M17692">
    <property type="protein sequence ID" value="AAA28255.1"/>
    <property type="molecule type" value="Genomic_DNA"/>
</dbReference>
<dbReference type="EMBL" id="Y10622">
    <property type="protein sequence ID" value="CAA71640.1"/>
    <property type="molecule type" value="Genomic_DNA"/>
</dbReference>
<dbReference type="PDB" id="1ECA">
    <property type="method" value="X-ray"/>
    <property type="resolution" value="1.40 A"/>
    <property type="chains" value="A=16-151"/>
</dbReference>
<dbReference type="PDB" id="1ECD">
    <property type="method" value="X-ray"/>
    <property type="resolution" value="1.40 A"/>
    <property type="chains" value="A=16-151"/>
</dbReference>
<dbReference type="PDB" id="1ECN">
    <property type="method" value="X-ray"/>
    <property type="resolution" value="1.40 A"/>
    <property type="chains" value="A=16-151"/>
</dbReference>
<dbReference type="PDB" id="1ECO">
    <property type="method" value="X-ray"/>
    <property type="resolution" value="1.40 A"/>
    <property type="chains" value="A=16-151"/>
</dbReference>
<dbReference type="PDBsum" id="1ECA"/>
<dbReference type="PDBsum" id="1ECD"/>
<dbReference type="PDBsum" id="1ECN"/>
<dbReference type="PDBsum" id="1ECO"/>
<dbReference type="SMR" id="P02229"/>
<dbReference type="Allergome" id="201">
    <property type="allergen name" value="Chi t 1"/>
</dbReference>
<dbReference type="Allergome" id="202">
    <property type="allergen name" value="Chi t 1.0101"/>
</dbReference>
<dbReference type="EvolutionaryTrace" id="P02229"/>
<dbReference type="GO" id="GO:0005576">
    <property type="term" value="C:extracellular region"/>
    <property type="evidence" value="ECO:0007669"/>
    <property type="project" value="InterPro"/>
</dbReference>
<dbReference type="GO" id="GO:0005833">
    <property type="term" value="C:hemoglobin complex"/>
    <property type="evidence" value="ECO:0007669"/>
    <property type="project" value="InterPro"/>
</dbReference>
<dbReference type="GO" id="GO:0020037">
    <property type="term" value="F:heme binding"/>
    <property type="evidence" value="ECO:0007669"/>
    <property type="project" value="InterPro"/>
</dbReference>
<dbReference type="GO" id="GO:0046872">
    <property type="term" value="F:metal ion binding"/>
    <property type="evidence" value="ECO:0007669"/>
    <property type="project" value="UniProtKB-KW"/>
</dbReference>
<dbReference type="GO" id="GO:0019825">
    <property type="term" value="F:oxygen binding"/>
    <property type="evidence" value="ECO:0007669"/>
    <property type="project" value="InterPro"/>
</dbReference>
<dbReference type="GO" id="GO:0005344">
    <property type="term" value="F:oxygen carrier activity"/>
    <property type="evidence" value="ECO:0007669"/>
    <property type="project" value="UniProtKB-KW"/>
</dbReference>
<dbReference type="CDD" id="cd01040">
    <property type="entry name" value="Mb-like"/>
    <property type="match status" value="1"/>
</dbReference>
<dbReference type="Gene3D" id="1.10.490.10">
    <property type="entry name" value="Globins"/>
    <property type="match status" value="1"/>
</dbReference>
<dbReference type="InterPro" id="IPR002336">
    <property type="entry name" value="Erythrocruorin"/>
</dbReference>
<dbReference type="InterPro" id="IPR000971">
    <property type="entry name" value="Globin"/>
</dbReference>
<dbReference type="InterPro" id="IPR009050">
    <property type="entry name" value="Globin-like_sf"/>
</dbReference>
<dbReference type="InterPro" id="IPR012292">
    <property type="entry name" value="Globin/Proto"/>
</dbReference>
<dbReference type="InterPro" id="IPR044399">
    <property type="entry name" value="Mb-like_M"/>
</dbReference>
<dbReference type="Pfam" id="PF00042">
    <property type="entry name" value="Globin"/>
    <property type="match status" value="1"/>
</dbReference>
<dbReference type="PRINTS" id="PR00611">
    <property type="entry name" value="ERYTHCRUORIN"/>
</dbReference>
<dbReference type="SUPFAM" id="SSF46458">
    <property type="entry name" value="Globin-like"/>
    <property type="match status" value="1"/>
</dbReference>
<dbReference type="PROSITE" id="PS01033">
    <property type="entry name" value="GLOBIN"/>
    <property type="match status" value="1"/>
</dbReference>
<reference key="1">
    <citation type="journal article" date="1987" name="Gene">
        <title>Genomic organization and primary structure of five homologous pairs of intron-less genes encoding secretory globins from the insect Chironomus thummi thummi.</title>
        <authorList>
            <person name="Antoine M."/>
            <person name="Erbil C."/>
            <person name="Muench E."/>
            <person name="Schnell S."/>
            <person name="Niessing J."/>
        </authorList>
    </citation>
    <scope>NUCLEOTIDE SEQUENCE [GENOMIC DNA]</scope>
</reference>
<reference key="2">
    <citation type="submission" date="1997-01" db="EMBL/GenBank/DDBJ databases">
        <authorList>
            <person name="Hankeln T."/>
            <person name="Amid C."/>
            <person name="Weich B."/>
            <person name="Schmidt E.R."/>
        </authorList>
    </citation>
    <scope>NUCLEOTIDE SEQUENCE [GENOMIC DNA]</scope>
</reference>
<reference key="3">
    <citation type="journal article" date="1979" name="Hoppe-Seyler's Z. Physiol. Chem.">
        <title>Hemoglobins, XXV. Hemoglobin (erythrocruorin) CTT III from Chironomus thummi thummi (Diptera). Primary structure and relationship to other heme proteins.</title>
        <authorList>
            <person name="Buse G."/>
            <person name="Steffens G.J."/>
            <person name="Braunitzer G."/>
            <person name="Steer W."/>
        </authorList>
    </citation>
    <scope>PROTEIN SEQUENCE OF 16-151</scope>
</reference>
<reference key="4">
    <citation type="journal article" date="1969" name="J. Mol. Biol.">
        <title>The environment of the haem group in erythrocruorin (Chironomus thummi).</title>
        <authorList>
            <person name="Huber R."/>
            <person name="Epp O."/>
            <person name="Formanek H."/>
        </authorList>
    </citation>
    <scope>HEME-BINDING</scope>
</reference>
<reference key="5">
    <citation type="journal article" date="1970" name="Hoppe-Seyler's Z. Physiol. Chem.">
        <title>Hemoglobins, XVIII. Isoelectric focussing of hemoglobins (erythrocruorins) from insects (Chironomus thummi, thummi, Diptera).</title>
        <authorList>
            <person name="Glossmann H."/>
            <person name="Horst J."/>
            <person name="Plagens U."/>
            <person name="Braunitzer G."/>
        </authorList>
    </citation>
    <scope>HEME-BINDING</scope>
</reference>
<reference key="6">
    <citation type="journal article" date="1978" name="J. Mol. Biol.">
        <title>The structure of oxy-erythrocruorin at 1.4-A resolution.</title>
        <authorList>
            <person name="Weber E."/>
            <person name="Steigemann W."/>
            <person name="Jones T.A."/>
            <person name="Huber R."/>
        </authorList>
    </citation>
    <scope>X-RAY CRYSTALLOGRAPHY (1.4 ANGSTROMS)</scope>
</reference>
<reference key="7">
    <citation type="journal article" date="1971" name="Eur. J. Biochem.">
        <title>The atomic structure of erythrocruorin in the light of the chemical sequence and its comparison with myoglobin.</title>
        <authorList>
            <person name="Huber R."/>
            <person name="Epp O."/>
            <person name="Steigemann W."/>
            <person name="Formanek H."/>
        </authorList>
    </citation>
    <scope>X-RAY CRYSTALLOGRAPHY (2.5 ANGSTROMS)</scope>
</reference>
<feature type="signal peptide" evidence="2">
    <location>
        <begin position="1"/>
        <end position="15"/>
    </location>
</feature>
<feature type="chain" id="PRO_0000011190" description="Globin CTT-III">
    <location>
        <begin position="16"/>
        <end position="151"/>
    </location>
</feature>
<feature type="domain" description="Globin" evidence="1">
    <location>
        <begin position="16"/>
        <end position="151"/>
    </location>
</feature>
<feature type="binding site" description="axial binding residue">
    <location>
        <position position="73"/>
    </location>
    <ligand>
        <name>heme b</name>
        <dbReference type="ChEBI" id="CHEBI:60344"/>
    </ligand>
    <ligandPart>
        <name>Fe</name>
        <dbReference type="ChEBI" id="CHEBI:18248"/>
    </ligandPart>
</feature>
<feature type="binding site" description="axial binding residue">
    <location>
        <position position="102"/>
    </location>
    <ligand>
        <name>heme b</name>
        <dbReference type="ChEBI" id="CHEBI:60344"/>
    </ligand>
    <ligandPart>
        <name>Fe</name>
        <dbReference type="ChEBI" id="CHEBI:18248"/>
    </ligandPart>
</feature>
<feature type="sequence variant" description="In A and A'.">
    <original>I</original>
    <variation>T</variation>
    <location>
        <position position="72"/>
    </location>
</feature>
<feature type="sequence variant" description="In A.">
    <original>EA</original>
    <variation>DG</variation>
    <location>
        <begin position="92"/>
        <end position="93"/>
    </location>
</feature>
<feature type="helix" evidence="3">
    <location>
        <begin position="18"/>
        <end position="29"/>
    </location>
</feature>
<feature type="turn" evidence="3">
    <location>
        <begin position="30"/>
        <end position="33"/>
    </location>
</feature>
<feature type="helix" evidence="3">
    <location>
        <begin position="35"/>
        <end position="45"/>
    </location>
</feature>
<feature type="helix" evidence="3">
    <location>
        <begin position="47"/>
        <end position="50"/>
    </location>
</feature>
<feature type="turn" evidence="3">
    <location>
        <begin position="54"/>
        <end position="58"/>
    </location>
</feature>
<feature type="helix" evidence="3">
    <location>
        <begin position="61"/>
        <end position="64"/>
    </location>
</feature>
<feature type="helix" evidence="3">
    <location>
        <begin position="68"/>
        <end position="86"/>
    </location>
</feature>
<feature type="turn" evidence="3">
    <location>
        <begin position="87"/>
        <end position="89"/>
    </location>
</feature>
<feature type="helix" evidence="3">
    <location>
        <begin position="92"/>
        <end position="102"/>
    </location>
</feature>
<feature type="helix" evidence="3">
    <location>
        <begin position="103"/>
        <end position="105"/>
    </location>
</feature>
<feature type="helix" evidence="3">
    <location>
        <begin position="109"/>
        <end position="126"/>
    </location>
</feature>
<feature type="helix" evidence="3">
    <location>
        <begin position="129"/>
        <end position="132"/>
    </location>
</feature>
<feature type="helix" evidence="3">
    <location>
        <begin position="133"/>
        <end position="150"/>
    </location>
</feature>